<comment type="function">
    <text evidence="2">Primarily required at the G2/M phase. Essential for viability: involved in nucleolar processing of pre-18S ribosomal RNA as part of the ribosomal small subunit (SSU) processome.</text>
</comment>
<comment type="subunit">
    <text evidence="2">Interacts with snoRNA U3. Interacts with MPP10. Component of the ribosomal small subunit (SSU) processome composed of at least 40 protein subunits and snoRNA U3.</text>
</comment>
<comment type="interaction">
    <interactant intactId="EBI-36084">
        <id>Q12136</id>
    </interactant>
    <interactant intactId="EBI-8170">
        <id>Q03532</id>
        <label>HAS1</label>
    </interactant>
    <organismsDiffer>false</organismsDiffer>
    <experiments>2</experiments>
</comment>
<comment type="interaction">
    <interactant intactId="EBI-36084">
        <id>Q12136</id>
    </interactant>
    <interactant intactId="EBI-5612">
        <id>P20448</id>
        <label>HCA4</label>
    </interactant>
    <organismsDiffer>false</organismsDiffer>
    <experiments>4</experiments>
</comment>
<comment type="interaction">
    <interactant intactId="EBI-36084">
        <id>Q12136</id>
    </interactant>
    <interactant intactId="EBI-9237">
        <id>P32899</id>
        <label>IMP3</label>
    </interactant>
    <organismsDiffer>false</organismsDiffer>
    <experiments>3</experiments>
</comment>
<comment type="interaction">
    <interactant intactId="EBI-36084">
        <id>Q12136</id>
    </interactant>
    <interactant intactId="EBI-21773">
        <id>P25586</id>
        <label>KRR1</label>
    </interactant>
    <organismsDiffer>false</organismsDiffer>
    <experiments>4</experiments>
</comment>
<comment type="interaction">
    <interactant intactId="EBI-36084">
        <id>Q12136</id>
    </interactant>
    <interactant intactId="EBI-11168">
        <id>P47083</id>
        <label>MPP10</label>
    </interactant>
    <organismsDiffer>false</organismsDiffer>
    <experiments>11</experiments>
</comment>
<comment type="interaction">
    <interactant intactId="EBI-36084">
        <id>Q12136</id>
    </interactant>
    <interactant intactId="EBI-36459">
        <id>Q06512</id>
        <label>NOC4</label>
    </interactant>
    <organismsDiffer>false</organismsDiffer>
    <experiments>3</experiments>
</comment>
<comment type="interaction">
    <interactant intactId="EBI-36084">
        <id>Q12136</id>
    </interactant>
    <interactant intactId="EBI-35157">
        <id>Q99207</id>
        <label>NOP14</label>
    </interactant>
    <organismsDiffer>false</organismsDiffer>
    <experiments>4</experiments>
</comment>
<comment type="interaction">
    <interactant intactId="EBI-36084">
        <id>Q12136</id>
    </interactant>
    <interactant intactId="EBI-23590">
        <id>P53317</id>
        <label>NOP19</label>
    </interactant>
    <organismsDiffer>false</organismsDiffer>
    <experiments>3</experiments>
</comment>
<comment type="interaction">
    <interactant intactId="EBI-36084">
        <id>Q12136</id>
    </interactant>
    <interactant intactId="EBI-31770">
        <id>Q12481</id>
        <label>RRP36</label>
    </interactant>
    <organismsDiffer>false</organismsDiffer>
    <experiments>3</experiments>
</comment>
<comment type="interaction">
    <interactant intactId="EBI-36084">
        <id>Q12136</id>
    </interactant>
    <interactant intactId="EBI-36084">
        <id>Q12136</id>
        <label>SAS10</label>
    </interactant>
    <organismsDiffer>false</organismsDiffer>
    <experiments>3</experiments>
</comment>
<comment type="interaction">
    <interactant intactId="EBI-36084">
        <id>Q12136</id>
    </interactant>
    <interactant intactId="EBI-359">
        <id>Q06078</id>
        <label>UTP21</label>
    </interactant>
    <organismsDiffer>false</organismsDiffer>
    <experiments>3</experiments>
</comment>
<comment type="interaction">
    <interactant intactId="EBI-36084">
        <id>Q12136</id>
    </interactant>
    <interactant intactId="EBI-25113">
        <id>P40498</id>
        <label>UTP25</label>
    </interactant>
    <organismsDiffer>false</organismsDiffer>
    <experiments>8</experiments>
</comment>
<comment type="interaction">
    <interactant intactId="EBI-36084">
        <id>Q12136</id>
    </interactant>
    <interactant intactId="EBI-22119">
        <id>Q02354</id>
        <label>UTP6</label>
    </interactant>
    <organismsDiffer>false</organismsDiffer>
    <experiments>6</experiments>
</comment>
<comment type="subcellular location">
    <subcellularLocation>
        <location evidence="2 3">Nucleus</location>
        <location evidence="2 3">Nucleolus</location>
    </subcellularLocation>
</comment>
<comment type="miscellaneous">
    <text>When overexpressed, has a role in the structure of silenced chromatin. Overproduction causes derepression of gene expression at both HML and HMR, as well as at the rDNA locus and at telomeres.</text>
</comment>
<comment type="similarity">
    <text evidence="4">Belongs to the SAS10 family.</text>
</comment>
<comment type="sequence caution" evidence="4">
    <conflict type="erroneous initiation">
        <sequence resource="EMBL-CDS" id="CAA66339"/>
    </conflict>
</comment>
<protein>
    <recommendedName>
        <fullName>Something about silencing protein 10</fullName>
    </recommendedName>
    <alternativeName>
        <fullName>U three protein 3</fullName>
    </alternativeName>
    <alternativeName>
        <fullName>U3 small nucleolar RNA-associated protein 3</fullName>
    </alternativeName>
    <alternativeName>
        <fullName>U3 snoRNA-associated protein 11</fullName>
    </alternativeName>
</protein>
<name>SAS10_YEAST</name>
<feature type="chain" id="PRO_0000114330" description="Something about silencing protein 10">
    <location>
        <begin position="1"/>
        <end position="610"/>
    </location>
</feature>
<feature type="region of interest" description="Disordered" evidence="1">
    <location>
        <begin position="1"/>
        <end position="23"/>
    </location>
</feature>
<feature type="region of interest" description="Disordered" evidence="1">
    <location>
        <begin position="40"/>
        <end position="133"/>
    </location>
</feature>
<feature type="region of interest" description="Disordered" evidence="1">
    <location>
        <begin position="331"/>
        <end position="411"/>
    </location>
</feature>
<feature type="region of interest" description="Disordered" evidence="1">
    <location>
        <begin position="451"/>
        <end position="511"/>
    </location>
</feature>
<feature type="region of interest" description="Disordered" evidence="1">
    <location>
        <begin position="548"/>
        <end position="578"/>
    </location>
</feature>
<feature type="compositionally biased region" description="Basic and acidic residues" evidence="1">
    <location>
        <begin position="46"/>
        <end position="55"/>
    </location>
</feature>
<feature type="compositionally biased region" description="Acidic residues" evidence="1">
    <location>
        <begin position="56"/>
        <end position="88"/>
    </location>
</feature>
<feature type="compositionally biased region" description="Acidic residues" evidence="1">
    <location>
        <begin position="105"/>
        <end position="114"/>
    </location>
</feature>
<feature type="compositionally biased region" description="Acidic residues" evidence="1">
    <location>
        <begin position="351"/>
        <end position="374"/>
    </location>
</feature>
<feature type="compositionally biased region" description="Acidic residues" evidence="1">
    <location>
        <begin position="392"/>
        <end position="405"/>
    </location>
</feature>
<feature type="compositionally biased region" description="Basic and acidic residues" evidence="1">
    <location>
        <begin position="451"/>
        <end position="463"/>
    </location>
</feature>
<feature type="compositionally biased region" description="Acidic residues" evidence="1">
    <location>
        <begin position="469"/>
        <end position="480"/>
    </location>
</feature>
<feature type="compositionally biased region" description="Polar residues" evidence="1">
    <location>
        <begin position="484"/>
        <end position="500"/>
    </location>
</feature>
<feature type="compositionally biased region" description="Basic and acidic residues" evidence="1">
    <location>
        <begin position="501"/>
        <end position="511"/>
    </location>
</feature>
<feature type="compositionally biased region" description="Basic residues" evidence="1">
    <location>
        <begin position="561"/>
        <end position="578"/>
    </location>
</feature>
<feature type="modified residue" description="Phosphoserine" evidence="7">
    <location>
        <position position="12"/>
    </location>
</feature>
<feature type="modified residue" description="Phosphoserine" evidence="6">
    <location>
        <position position="314"/>
    </location>
</feature>
<feature type="modified residue" description="Phosphoserine" evidence="6 7">
    <location>
        <position position="316"/>
    </location>
</feature>
<feature type="modified residue" description="Phosphoserine" evidence="6 7">
    <location>
        <position position="336"/>
    </location>
</feature>
<feature type="modified residue" description="Phosphoserine" evidence="6 7">
    <location>
        <position position="339"/>
    </location>
</feature>
<feature type="modified residue" description="Phosphoserine" evidence="5 6 7">
    <location>
        <position position="477"/>
    </location>
</feature>
<keyword id="KW-0002">3D-structure</keyword>
<keyword id="KW-0131">Cell cycle</keyword>
<keyword id="KW-0539">Nucleus</keyword>
<keyword id="KW-0597">Phosphoprotein</keyword>
<keyword id="KW-1185">Reference proteome</keyword>
<keyword id="KW-0687">Ribonucleoprotein</keyword>
<keyword id="KW-0690">Ribosome biogenesis</keyword>
<keyword id="KW-0698">rRNA processing</keyword>
<accession>Q12136</accession>
<accession>D6VRJ7</accession>
<accession>Q05842</accession>
<sequence length="610" mass="70259">MVRKGSNRTKTSEVGDEINPYGLNEVDDFASKREKVLLGQSTFGDSNKDDDHSLLEDEDEEEVLAMDEDDESIDEREDEEEEEEEELDGAAAYKKIFGRNLETDQLPEEDEENGMLDNENAWGSTKGEYYGADDLDDDEAAKEIEKEALRQQKKHLEELNMNDYLDEEEEEEWVKSAKEFDMGEFKNSTKQADTKTSITDILNMDDEARDNYLRTMFPEFAPLSKEFTELAPKFDELKKSEENEFNKLKLIALGSYLGTISCYYSILLHELHNNEDFTSMKGHPVMEKILTTKEIWRQASELPSSFDVNEGDGSESEETANIEAFNEKKLNELQNSEDSDAEDGGKQKQEIDEEERESDEEEEEEDVDIDDFEEYVAQSRLHSKPKTSSMPEADDFIESEIADVDAQDKKARRRTLRFYTSKIDQQENKKTDRFKGDDDIPYKERLFERQQRLLDEARKRGMHDNNGADLDDKDYGSEDEAVSRSINTQGENDYYQQVQRGKQDKKISRKEAHKNAVIAAREGKLAELAENVSGDGKRAINYQILKNKGLTPKRNKDNRNSRVKKRKKYQKAQKKLKSVRAVYSGGQSGVYEGEKTGIKKGLTRSVKFKN</sequence>
<gene>
    <name type="primary">SAS10</name>
    <name type="synonym">UTP3</name>
    <name type="ordered locus">YDL153C</name>
    <name type="ORF">D1545</name>
</gene>
<proteinExistence type="evidence at protein level"/>
<dbReference type="EMBL" id="U63063">
    <property type="protein sequence ID" value="AAB05801.1"/>
    <property type="molecule type" value="mRNA"/>
</dbReference>
<dbReference type="EMBL" id="X97751">
    <property type="protein sequence ID" value="CAA66339.1"/>
    <property type="status" value="ALT_INIT"/>
    <property type="molecule type" value="Genomic_DNA"/>
</dbReference>
<dbReference type="EMBL" id="Z74201">
    <property type="protein sequence ID" value="CAA98726.1"/>
    <property type="molecule type" value="Genomic_DNA"/>
</dbReference>
<dbReference type="EMBL" id="AY692844">
    <property type="protein sequence ID" value="AAT92863.1"/>
    <property type="molecule type" value="Genomic_DNA"/>
</dbReference>
<dbReference type="EMBL" id="BK006938">
    <property type="protein sequence ID" value="DAA11707.1"/>
    <property type="molecule type" value="Genomic_DNA"/>
</dbReference>
<dbReference type="PIR" id="S67701">
    <property type="entry name" value="S67701"/>
</dbReference>
<dbReference type="RefSeq" id="NP_010128.1">
    <property type="nucleotide sequence ID" value="NM_001180213.1"/>
</dbReference>
<dbReference type="PDB" id="5WLC">
    <property type="method" value="EM"/>
    <property type="resolution" value="3.80 A"/>
    <property type="chains" value="NB=1-610"/>
</dbReference>
<dbReference type="PDB" id="6KE6">
    <property type="method" value="EM"/>
    <property type="resolution" value="3.40 A"/>
    <property type="chains" value="5H=1-610"/>
</dbReference>
<dbReference type="PDB" id="6LQP">
    <property type="method" value="EM"/>
    <property type="resolution" value="3.20 A"/>
    <property type="chains" value="5H=1-610"/>
</dbReference>
<dbReference type="PDB" id="6LQQ">
    <property type="method" value="EM"/>
    <property type="resolution" value="4.10 A"/>
    <property type="chains" value="5H=1-610"/>
</dbReference>
<dbReference type="PDB" id="6LQR">
    <property type="method" value="EM"/>
    <property type="resolution" value="8.60 A"/>
    <property type="chains" value="5H=1-610"/>
</dbReference>
<dbReference type="PDB" id="6LQS">
    <property type="method" value="EM"/>
    <property type="resolution" value="3.80 A"/>
    <property type="chains" value="5H=1-610"/>
</dbReference>
<dbReference type="PDB" id="6LQT">
    <property type="method" value="EM"/>
    <property type="resolution" value="4.90 A"/>
    <property type="chains" value="5H=1-610"/>
</dbReference>
<dbReference type="PDB" id="6LQU">
    <property type="method" value="EM"/>
    <property type="resolution" value="3.70 A"/>
    <property type="chains" value="5H=1-610"/>
</dbReference>
<dbReference type="PDB" id="6LQV">
    <property type="method" value="EM"/>
    <property type="resolution" value="4.80 A"/>
    <property type="chains" value="5H=1-610"/>
</dbReference>
<dbReference type="PDB" id="6ZQA">
    <property type="method" value="EM"/>
    <property type="resolution" value="4.40 A"/>
    <property type="chains" value="UC=1-610"/>
</dbReference>
<dbReference type="PDB" id="6ZQB">
    <property type="method" value="EM"/>
    <property type="resolution" value="3.90 A"/>
    <property type="chains" value="UC=1-610"/>
</dbReference>
<dbReference type="PDB" id="6ZQC">
    <property type="method" value="EM"/>
    <property type="resolution" value="3.80 A"/>
    <property type="chains" value="UC=1-610"/>
</dbReference>
<dbReference type="PDB" id="6ZQD">
    <property type="method" value="EM"/>
    <property type="resolution" value="3.80 A"/>
    <property type="chains" value="UC=1-610"/>
</dbReference>
<dbReference type="PDB" id="6ZQE">
    <property type="method" value="EM"/>
    <property type="resolution" value="7.10 A"/>
    <property type="chains" value="UC=1-610"/>
</dbReference>
<dbReference type="PDB" id="6ZQF">
    <property type="method" value="EM"/>
    <property type="resolution" value="4.90 A"/>
    <property type="chains" value="UC=1-610"/>
</dbReference>
<dbReference type="PDB" id="6ZQG">
    <property type="method" value="EM"/>
    <property type="resolution" value="3.50 A"/>
    <property type="chains" value="UC=1-610"/>
</dbReference>
<dbReference type="PDB" id="7AJT">
    <property type="method" value="EM"/>
    <property type="resolution" value="4.60 A"/>
    <property type="chains" value="UC=1-610"/>
</dbReference>
<dbReference type="PDB" id="7AJU">
    <property type="method" value="EM"/>
    <property type="resolution" value="3.80 A"/>
    <property type="chains" value="UC=1-610"/>
</dbReference>
<dbReference type="PDB" id="7D4I">
    <property type="method" value="EM"/>
    <property type="resolution" value="4.00 A"/>
    <property type="chains" value="5H=1-610"/>
</dbReference>
<dbReference type="PDB" id="7D5S">
    <property type="method" value="EM"/>
    <property type="resolution" value="4.60 A"/>
    <property type="chains" value="5H=1-610"/>
</dbReference>
<dbReference type="PDB" id="7D5T">
    <property type="method" value="EM"/>
    <property type="resolution" value="6.00 A"/>
    <property type="chains" value="5H=1-610"/>
</dbReference>
<dbReference type="PDB" id="7D63">
    <property type="method" value="EM"/>
    <property type="resolution" value="12.30 A"/>
    <property type="chains" value="5H=1-610"/>
</dbReference>
<dbReference type="PDB" id="7SUK">
    <property type="method" value="EM"/>
    <property type="resolution" value="3.99 A"/>
    <property type="chains" value="NB=431-610"/>
</dbReference>
<dbReference type="PDB" id="7WTL">
    <property type="method" value="EM"/>
    <property type="resolution" value="3.30 A"/>
    <property type="chains" value="UC=1-610"/>
</dbReference>
<dbReference type="PDBsum" id="5WLC"/>
<dbReference type="PDBsum" id="6KE6"/>
<dbReference type="PDBsum" id="6LQP"/>
<dbReference type="PDBsum" id="6LQQ"/>
<dbReference type="PDBsum" id="6LQR"/>
<dbReference type="PDBsum" id="6LQS"/>
<dbReference type="PDBsum" id="6LQT"/>
<dbReference type="PDBsum" id="6LQU"/>
<dbReference type="PDBsum" id="6LQV"/>
<dbReference type="PDBsum" id="6ZQA"/>
<dbReference type="PDBsum" id="6ZQB"/>
<dbReference type="PDBsum" id="6ZQC"/>
<dbReference type="PDBsum" id="6ZQD"/>
<dbReference type="PDBsum" id="6ZQE"/>
<dbReference type="PDBsum" id="6ZQF"/>
<dbReference type="PDBsum" id="6ZQG"/>
<dbReference type="PDBsum" id="7AJT"/>
<dbReference type="PDBsum" id="7AJU"/>
<dbReference type="PDBsum" id="7D4I"/>
<dbReference type="PDBsum" id="7D5S"/>
<dbReference type="PDBsum" id="7D5T"/>
<dbReference type="PDBsum" id="7D63"/>
<dbReference type="PDBsum" id="7SUK"/>
<dbReference type="PDBsum" id="7WTL"/>
<dbReference type="EMDB" id="EMD-0949"/>
<dbReference type="EMDB" id="EMD-0950"/>
<dbReference type="EMDB" id="EMD-0951"/>
<dbReference type="EMDB" id="EMD-0952"/>
<dbReference type="EMDB" id="EMD-0953"/>
<dbReference type="EMDB" id="EMD-0954"/>
<dbReference type="EMDB" id="EMD-0955"/>
<dbReference type="EMDB" id="EMD-11357"/>
<dbReference type="EMDB" id="EMD-11358"/>
<dbReference type="EMDB" id="EMD-11359"/>
<dbReference type="EMDB" id="EMD-11360"/>
<dbReference type="EMDB" id="EMD-11361"/>
<dbReference type="EMDB" id="EMD-11362"/>
<dbReference type="EMDB" id="EMD-11363"/>
<dbReference type="EMDB" id="EMD-11807"/>
<dbReference type="EMDB" id="EMD-11808"/>
<dbReference type="EMDB" id="EMD-25441"/>
<dbReference type="EMDB" id="EMD-30574"/>
<dbReference type="EMDB" id="EMD-30584"/>
<dbReference type="EMDB" id="EMD-30585"/>
<dbReference type="EMDB" id="EMD-30588"/>
<dbReference type="EMDB" id="EMD-32790"/>
<dbReference type="EMDB" id="EMD-8859"/>
<dbReference type="EMDB" id="EMD-9964"/>
<dbReference type="SMR" id="Q12136"/>
<dbReference type="BioGRID" id="31910">
    <property type="interactions" value="242"/>
</dbReference>
<dbReference type="ComplexPortal" id="CPX-1604">
    <property type="entry name" value="Small ribosomal subunit processome"/>
</dbReference>
<dbReference type="DIP" id="DIP-5047N"/>
<dbReference type="FunCoup" id="Q12136">
    <property type="interactions" value="483"/>
</dbReference>
<dbReference type="IntAct" id="Q12136">
    <property type="interactions" value="114"/>
</dbReference>
<dbReference type="MINT" id="Q12136"/>
<dbReference type="STRING" id="4932.YDL153C"/>
<dbReference type="iPTMnet" id="Q12136"/>
<dbReference type="PaxDb" id="4932-YDL153C"/>
<dbReference type="PeptideAtlas" id="Q12136"/>
<dbReference type="EnsemblFungi" id="YDL153C_mRNA">
    <property type="protein sequence ID" value="YDL153C"/>
    <property type="gene ID" value="YDL153C"/>
</dbReference>
<dbReference type="GeneID" id="851403"/>
<dbReference type="KEGG" id="sce:YDL153C"/>
<dbReference type="AGR" id="SGD:S000002312"/>
<dbReference type="SGD" id="S000002312">
    <property type="gene designation" value="SAS10"/>
</dbReference>
<dbReference type="VEuPathDB" id="FungiDB:YDL153C"/>
<dbReference type="eggNOG" id="KOG3118">
    <property type="taxonomic scope" value="Eukaryota"/>
</dbReference>
<dbReference type="GeneTree" id="ENSGT00500000044947"/>
<dbReference type="HOGENOM" id="CLU_019106_1_0_1"/>
<dbReference type="InParanoid" id="Q12136"/>
<dbReference type="OMA" id="KSMKPVW"/>
<dbReference type="OrthoDB" id="1924577at2759"/>
<dbReference type="BioCyc" id="YEAST:G3O-29548-MONOMER"/>
<dbReference type="Reactome" id="R-SCE-6791226">
    <property type="pathway name" value="Major pathway of rRNA processing in the nucleolus and cytosol"/>
</dbReference>
<dbReference type="BioGRID-ORCS" id="851403">
    <property type="hits" value="10 hits in 10 CRISPR screens"/>
</dbReference>
<dbReference type="PRO" id="PR:Q12136"/>
<dbReference type="Proteomes" id="UP000002311">
    <property type="component" value="Chromosome IV"/>
</dbReference>
<dbReference type="RNAct" id="Q12136">
    <property type="molecule type" value="protein"/>
</dbReference>
<dbReference type="GO" id="GO:0005730">
    <property type="term" value="C:nucleolus"/>
    <property type="evidence" value="ECO:0000314"/>
    <property type="project" value="SGD"/>
</dbReference>
<dbReference type="GO" id="GO:0005654">
    <property type="term" value="C:nucleoplasm"/>
    <property type="evidence" value="ECO:0000304"/>
    <property type="project" value="Reactome"/>
</dbReference>
<dbReference type="GO" id="GO:0005634">
    <property type="term" value="C:nucleus"/>
    <property type="evidence" value="ECO:0000314"/>
    <property type="project" value="SGD"/>
</dbReference>
<dbReference type="GO" id="GO:0032040">
    <property type="term" value="C:small-subunit processome"/>
    <property type="evidence" value="ECO:0000314"/>
    <property type="project" value="SGD"/>
</dbReference>
<dbReference type="GO" id="GO:0042802">
    <property type="term" value="F:identical protein binding"/>
    <property type="evidence" value="ECO:0000353"/>
    <property type="project" value="IntAct"/>
</dbReference>
<dbReference type="GO" id="GO:0000480">
    <property type="term" value="P:endonucleolytic cleavage in 5'-ETS of tricistronic rRNA transcript (SSU-rRNA, 5.8S rRNA, LSU-rRNA)"/>
    <property type="evidence" value="ECO:0000315"/>
    <property type="project" value="SGD"/>
</dbReference>
<dbReference type="GO" id="GO:0000447">
    <property type="term" value="P:endonucleolytic cleavage in ITS1 to separate SSU-rRNA from 5.8S rRNA and LSU-rRNA from tricistronic rRNA transcript (SSU-rRNA, 5.8S rRNA, LSU-rRNA)"/>
    <property type="evidence" value="ECO:0000315"/>
    <property type="project" value="SGD"/>
</dbReference>
<dbReference type="GO" id="GO:0000472">
    <property type="term" value="P:endonucleolytic cleavage to generate mature 5'-end of SSU-rRNA from (SSU-rRNA, 5.8S rRNA, LSU-rRNA)"/>
    <property type="evidence" value="ECO:0000315"/>
    <property type="project" value="SGD"/>
</dbReference>
<dbReference type="GO" id="GO:0030490">
    <property type="term" value="P:maturation of SSU-rRNA"/>
    <property type="evidence" value="ECO:0000303"/>
    <property type="project" value="ComplexPortal"/>
</dbReference>
<dbReference type="GO" id="GO:0000462">
    <property type="term" value="P:maturation of SSU-rRNA from tricistronic rRNA transcript (SSU-rRNA, 5.8S rRNA, LSU-rRNA)"/>
    <property type="evidence" value="ECO:0000315"/>
    <property type="project" value="SGD"/>
</dbReference>
<dbReference type="InterPro" id="IPR007146">
    <property type="entry name" value="Sas10/Utp3/C1D"/>
</dbReference>
<dbReference type="InterPro" id="IPR018972">
    <property type="entry name" value="Sas10_C_dom"/>
</dbReference>
<dbReference type="PANTHER" id="PTHR13237:SF8">
    <property type="entry name" value="SOMETHING ABOUT SILENCING PROTEIN 10"/>
    <property type="match status" value="1"/>
</dbReference>
<dbReference type="PANTHER" id="PTHR13237">
    <property type="entry name" value="SOMETHING ABOUT SILENCING PROTEIN 10-RELATED"/>
    <property type="match status" value="1"/>
</dbReference>
<dbReference type="Pfam" id="PF09368">
    <property type="entry name" value="Sas10"/>
    <property type="match status" value="1"/>
</dbReference>
<dbReference type="Pfam" id="PF04000">
    <property type="entry name" value="Sas10_Utp3"/>
    <property type="match status" value="1"/>
</dbReference>
<organism>
    <name type="scientific">Saccharomyces cerevisiae (strain ATCC 204508 / S288c)</name>
    <name type="common">Baker's yeast</name>
    <dbReference type="NCBI Taxonomy" id="559292"/>
    <lineage>
        <taxon>Eukaryota</taxon>
        <taxon>Fungi</taxon>
        <taxon>Dikarya</taxon>
        <taxon>Ascomycota</taxon>
        <taxon>Saccharomycotina</taxon>
        <taxon>Saccharomycetes</taxon>
        <taxon>Saccharomycetales</taxon>
        <taxon>Saccharomycetaceae</taxon>
        <taxon>Saccharomyces</taxon>
    </lineage>
</organism>
<reference key="1">
    <citation type="journal article" date="1998" name="Genetics">
        <title>Sir- and silencer-independent disruption of silencing in Saccharomyces by Sas10p.</title>
        <authorList>
            <person name="Kamakaka R.T."/>
            <person name="Rine J."/>
        </authorList>
    </citation>
    <scope>NUCLEOTIDE SEQUENCE [MRNA]</scope>
    <scope>OVEREXPRESSION</scope>
    <scope>SUBCELLULAR LOCATION</scope>
</reference>
<reference key="2">
    <citation type="journal article" date="1996" name="Yeast">
        <title>Analysis of a 23 kb region on the left arm of yeast chromosome IV.</title>
        <authorList>
            <person name="Delaveau T.T.D."/>
            <person name="Blugeon C."/>
            <person name="Jacq C."/>
            <person name="Perea J."/>
        </authorList>
    </citation>
    <scope>NUCLEOTIDE SEQUENCE [GENOMIC DNA]</scope>
</reference>
<reference key="3">
    <citation type="journal article" date="1997" name="Nature">
        <title>The nucleotide sequence of Saccharomyces cerevisiae chromosome IV.</title>
        <authorList>
            <person name="Jacq C."/>
            <person name="Alt-Moerbe J."/>
            <person name="Andre B."/>
            <person name="Arnold W."/>
            <person name="Bahr A."/>
            <person name="Ballesta J.P.G."/>
            <person name="Bargues M."/>
            <person name="Baron L."/>
            <person name="Becker A."/>
            <person name="Biteau N."/>
            <person name="Bloecker H."/>
            <person name="Blugeon C."/>
            <person name="Boskovic J."/>
            <person name="Brandt P."/>
            <person name="Brueckner M."/>
            <person name="Buitrago M.J."/>
            <person name="Coster F."/>
            <person name="Delaveau T."/>
            <person name="del Rey F."/>
            <person name="Dujon B."/>
            <person name="Eide L.G."/>
            <person name="Garcia-Cantalejo J.M."/>
            <person name="Goffeau A."/>
            <person name="Gomez-Peris A."/>
            <person name="Granotier C."/>
            <person name="Hanemann V."/>
            <person name="Hankeln T."/>
            <person name="Hoheisel J.D."/>
            <person name="Jaeger W."/>
            <person name="Jimenez A."/>
            <person name="Jonniaux J.-L."/>
            <person name="Kraemer C."/>
            <person name="Kuester H."/>
            <person name="Laamanen P."/>
            <person name="Legros Y."/>
            <person name="Louis E.J."/>
            <person name="Moeller-Rieker S."/>
            <person name="Monnet A."/>
            <person name="Moro M."/>
            <person name="Mueller-Auer S."/>
            <person name="Nussbaumer B."/>
            <person name="Paricio N."/>
            <person name="Paulin L."/>
            <person name="Perea J."/>
            <person name="Perez-Alonso M."/>
            <person name="Perez-Ortin J.E."/>
            <person name="Pohl T.M."/>
            <person name="Prydz H."/>
            <person name="Purnelle B."/>
            <person name="Rasmussen S.W."/>
            <person name="Remacha M.A."/>
            <person name="Revuelta J.L."/>
            <person name="Rieger M."/>
            <person name="Salom D."/>
            <person name="Saluz H.P."/>
            <person name="Saiz J.E."/>
            <person name="Saren A.-M."/>
            <person name="Schaefer M."/>
            <person name="Scharfe M."/>
            <person name="Schmidt E.R."/>
            <person name="Schneider C."/>
            <person name="Scholler P."/>
            <person name="Schwarz S."/>
            <person name="Soler-Mira A."/>
            <person name="Urrestarazu L.A."/>
            <person name="Verhasselt P."/>
            <person name="Vissers S."/>
            <person name="Voet M."/>
            <person name="Volckaert G."/>
            <person name="Wagner G."/>
            <person name="Wambutt R."/>
            <person name="Wedler E."/>
            <person name="Wedler H."/>
            <person name="Woelfl S."/>
            <person name="Harris D.E."/>
            <person name="Bowman S."/>
            <person name="Brown D."/>
            <person name="Churcher C.M."/>
            <person name="Connor R."/>
            <person name="Dedman K."/>
            <person name="Gentles S."/>
            <person name="Hamlin N."/>
            <person name="Hunt S."/>
            <person name="Jones L."/>
            <person name="McDonald S."/>
            <person name="Murphy L.D."/>
            <person name="Niblett D."/>
            <person name="Odell C."/>
            <person name="Oliver K."/>
            <person name="Rajandream M.A."/>
            <person name="Richards C."/>
            <person name="Shore L."/>
            <person name="Walsh S.V."/>
            <person name="Barrell B.G."/>
            <person name="Dietrich F.S."/>
            <person name="Mulligan J.T."/>
            <person name="Allen E."/>
            <person name="Araujo R."/>
            <person name="Aviles E."/>
            <person name="Berno A."/>
            <person name="Carpenter J."/>
            <person name="Chen E."/>
            <person name="Cherry J.M."/>
            <person name="Chung E."/>
            <person name="Duncan M."/>
            <person name="Hunicke-Smith S."/>
            <person name="Hyman R.W."/>
            <person name="Komp C."/>
            <person name="Lashkari D."/>
            <person name="Lew H."/>
            <person name="Lin D."/>
            <person name="Mosedale D."/>
            <person name="Nakahara K."/>
            <person name="Namath A."/>
            <person name="Oefner P."/>
            <person name="Oh C."/>
            <person name="Petel F.X."/>
            <person name="Roberts D."/>
            <person name="Schramm S."/>
            <person name="Schroeder M."/>
            <person name="Shogren T."/>
            <person name="Shroff N."/>
            <person name="Winant A."/>
            <person name="Yelton M.A."/>
            <person name="Botstein D."/>
            <person name="Davis R.W."/>
            <person name="Johnston M."/>
            <person name="Andrews S."/>
            <person name="Brinkman R."/>
            <person name="Cooper J."/>
            <person name="Ding H."/>
            <person name="Du Z."/>
            <person name="Favello A."/>
            <person name="Fulton L."/>
            <person name="Gattung S."/>
            <person name="Greco T."/>
            <person name="Hallsworth K."/>
            <person name="Hawkins J."/>
            <person name="Hillier L.W."/>
            <person name="Jier M."/>
            <person name="Johnson D."/>
            <person name="Johnston L."/>
            <person name="Kirsten J."/>
            <person name="Kucaba T."/>
            <person name="Langston Y."/>
            <person name="Latreille P."/>
            <person name="Le T."/>
            <person name="Mardis E."/>
            <person name="Menezes S."/>
            <person name="Miller N."/>
            <person name="Nhan M."/>
            <person name="Pauley A."/>
            <person name="Peluso D."/>
            <person name="Rifkin L."/>
            <person name="Riles L."/>
            <person name="Taich A."/>
            <person name="Trevaskis E."/>
            <person name="Vignati D."/>
            <person name="Wilcox L."/>
            <person name="Wohldman P."/>
            <person name="Vaudin M."/>
            <person name="Wilson R."/>
            <person name="Waterston R."/>
            <person name="Albermann K."/>
            <person name="Hani J."/>
            <person name="Heumann K."/>
            <person name="Kleine K."/>
            <person name="Mewes H.-W."/>
            <person name="Zollner A."/>
            <person name="Zaccaria P."/>
        </authorList>
    </citation>
    <scope>NUCLEOTIDE SEQUENCE [LARGE SCALE GENOMIC DNA]</scope>
    <source>
        <strain>ATCC 204508 / S288c</strain>
    </source>
</reference>
<reference key="4">
    <citation type="journal article" date="2014" name="G3 (Bethesda)">
        <title>The reference genome sequence of Saccharomyces cerevisiae: Then and now.</title>
        <authorList>
            <person name="Engel S.R."/>
            <person name="Dietrich F.S."/>
            <person name="Fisk D.G."/>
            <person name="Binkley G."/>
            <person name="Balakrishnan R."/>
            <person name="Costanzo M.C."/>
            <person name="Dwight S.S."/>
            <person name="Hitz B.C."/>
            <person name="Karra K."/>
            <person name="Nash R.S."/>
            <person name="Weng S."/>
            <person name="Wong E.D."/>
            <person name="Lloyd P."/>
            <person name="Skrzypek M.S."/>
            <person name="Miyasato S.R."/>
            <person name="Simison M."/>
            <person name="Cherry J.M."/>
        </authorList>
    </citation>
    <scope>GENOME REANNOTATION</scope>
    <source>
        <strain>ATCC 204508 / S288c</strain>
    </source>
</reference>
<reference key="5">
    <citation type="journal article" date="2007" name="Genome Res.">
        <title>Approaching a complete repository of sequence-verified protein-encoding clones for Saccharomyces cerevisiae.</title>
        <authorList>
            <person name="Hu Y."/>
            <person name="Rolfs A."/>
            <person name="Bhullar B."/>
            <person name="Murthy T.V.S."/>
            <person name="Zhu C."/>
            <person name="Berger M.F."/>
            <person name="Camargo A.A."/>
            <person name="Kelley F."/>
            <person name="McCarron S."/>
            <person name="Jepson D."/>
            <person name="Richardson A."/>
            <person name="Raphael J."/>
            <person name="Moreira D."/>
            <person name="Taycher E."/>
            <person name="Zuo D."/>
            <person name="Mohr S."/>
            <person name="Kane M.F."/>
            <person name="Williamson J."/>
            <person name="Simpson A.J.G."/>
            <person name="Bulyk M.L."/>
            <person name="Harlow E."/>
            <person name="Marsischky G."/>
            <person name="Kolodner R.D."/>
            <person name="LaBaer J."/>
        </authorList>
    </citation>
    <scope>NUCLEOTIDE SEQUENCE [GENOMIC DNA]</scope>
    <source>
        <strain>ATCC 204508 / S288c</strain>
    </source>
</reference>
<reference key="6">
    <citation type="journal article" date="2002" name="Nature">
        <title>A large nucleolar U3 ribonucleoprotein required for 18S ribosomal RNA biogenesis.</title>
        <authorList>
            <person name="Dragon F."/>
            <person name="Gallagher J.E.G."/>
            <person name="Compagnone-Post P.A."/>
            <person name="Mitchell B.M."/>
            <person name="Porwancher K.A."/>
            <person name="Wehner K.A."/>
            <person name="Wormsley S."/>
            <person name="Settlage R.E."/>
            <person name="Shabanowitz J."/>
            <person name="Osheim Y."/>
            <person name="Beyer A.L."/>
            <person name="Hunt D.F."/>
            <person name="Baserga S.J."/>
        </authorList>
    </citation>
    <scope>FUNCTION</scope>
    <scope>INTERACTION WITH MPP10 AND SNORNA U3</scope>
    <scope>IDENTIFICATION IN SSU PROCESSOME BY MASS SPECTROMETRY</scope>
    <scope>SUBCELLULAR LOCATION</scope>
</reference>
<reference key="7">
    <citation type="journal article" date="2007" name="J. Proteome Res.">
        <title>Large-scale phosphorylation analysis of alpha-factor-arrested Saccharomyces cerevisiae.</title>
        <authorList>
            <person name="Li X."/>
            <person name="Gerber S.A."/>
            <person name="Rudner A.D."/>
            <person name="Beausoleil S.A."/>
            <person name="Haas W."/>
            <person name="Villen J."/>
            <person name="Elias J.E."/>
            <person name="Gygi S.P."/>
        </authorList>
    </citation>
    <scope>PHOSPHORYLATION [LARGE SCALE ANALYSIS] AT SER-477</scope>
    <scope>IDENTIFICATION BY MASS SPECTROMETRY [LARGE SCALE ANALYSIS]</scope>
    <source>
        <strain>ADR376</strain>
    </source>
</reference>
<reference key="8">
    <citation type="journal article" date="2008" name="Mol. Cell. Proteomics">
        <title>A multidimensional chromatography technology for in-depth phosphoproteome analysis.</title>
        <authorList>
            <person name="Albuquerque C.P."/>
            <person name="Smolka M.B."/>
            <person name="Payne S.H."/>
            <person name="Bafna V."/>
            <person name="Eng J."/>
            <person name="Zhou H."/>
        </authorList>
    </citation>
    <scope>PHOSPHORYLATION [LARGE SCALE ANALYSIS] AT SER-314; SER-316; SER-336; SER-339 AND SER-477</scope>
    <scope>IDENTIFICATION BY MASS SPECTROMETRY [LARGE SCALE ANALYSIS]</scope>
</reference>
<reference key="9">
    <citation type="journal article" date="2009" name="Science">
        <title>Global analysis of Cdk1 substrate phosphorylation sites provides insights into evolution.</title>
        <authorList>
            <person name="Holt L.J."/>
            <person name="Tuch B.B."/>
            <person name="Villen J."/>
            <person name="Johnson A.D."/>
            <person name="Gygi S.P."/>
            <person name="Morgan D.O."/>
        </authorList>
    </citation>
    <scope>PHOSPHORYLATION [LARGE SCALE ANALYSIS] AT SER-12; SER-316; SER-336; SER-339 AND SER-477</scope>
    <scope>IDENTIFICATION BY MASS SPECTROMETRY [LARGE SCALE ANALYSIS]</scope>
</reference>
<evidence type="ECO:0000256" key="1">
    <source>
        <dbReference type="SAM" id="MobiDB-lite"/>
    </source>
</evidence>
<evidence type="ECO:0000269" key="2">
    <source>
    </source>
</evidence>
<evidence type="ECO:0000269" key="3">
    <source>
    </source>
</evidence>
<evidence type="ECO:0000305" key="4"/>
<evidence type="ECO:0007744" key="5">
    <source>
    </source>
</evidence>
<evidence type="ECO:0007744" key="6">
    <source>
    </source>
</evidence>
<evidence type="ECO:0007744" key="7">
    <source>
    </source>
</evidence>